<name>ZUPT_NEIMF</name>
<keyword id="KW-0997">Cell inner membrane</keyword>
<keyword id="KW-1003">Cell membrane</keyword>
<keyword id="KW-0406">Ion transport</keyword>
<keyword id="KW-0408">Iron</keyword>
<keyword id="KW-0472">Membrane</keyword>
<keyword id="KW-0479">Metal-binding</keyword>
<keyword id="KW-0812">Transmembrane</keyword>
<keyword id="KW-1133">Transmembrane helix</keyword>
<keyword id="KW-0813">Transport</keyword>
<keyword id="KW-0862">Zinc</keyword>
<keyword id="KW-0864">Zinc transport</keyword>
<organism>
    <name type="scientific">Neisseria meningitidis serogroup C / serotype 2a (strain ATCC 700532 / DSM 15464 / FAM18)</name>
    <dbReference type="NCBI Taxonomy" id="272831"/>
    <lineage>
        <taxon>Bacteria</taxon>
        <taxon>Pseudomonadati</taxon>
        <taxon>Pseudomonadota</taxon>
        <taxon>Betaproteobacteria</taxon>
        <taxon>Neisseriales</taxon>
        <taxon>Neisseriaceae</taxon>
        <taxon>Neisseria</taxon>
    </lineage>
</organism>
<feature type="chain" id="PRO_1000017775" description="Zinc transporter ZupT">
    <location>
        <begin position="1"/>
        <end position="269"/>
    </location>
</feature>
<feature type="transmembrane region" description="Helical" evidence="1">
    <location>
        <begin position="12"/>
        <end position="32"/>
    </location>
</feature>
<feature type="transmembrane region" description="Helical" evidence="1">
    <location>
        <begin position="41"/>
        <end position="61"/>
    </location>
</feature>
<feature type="transmembrane region" description="Helical" evidence="1">
    <location>
        <begin position="75"/>
        <end position="95"/>
    </location>
</feature>
<feature type="transmembrane region" description="Helical" evidence="1">
    <location>
        <begin position="126"/>
        <end position="146"/>
    </location>
</feature>
<feature type="transmembrane region" description="Helical" evidence="1">
    <location>
        <begin position="152"/>
        <end position="172"/>
    </location>
</feature>
<feature type="transmembrane region" description="Helical" evidence="1">
    <location>
        <begin position="187"/>
        <end position="207"/>
    </location>
</feature>
<feature type="transmembrane region" description="Helical" evidence="1">
    <location>
        <begin position="211"/>
        <end position="231"/>
    </location>
</feature>
<feature type="transmembrane region" description="Helical" evidence="1">
    <location>
        <begin position="249"/>
        <end position="269"/>
    </location>
</feature>
<feature type="binding site" description="M2 metal binding site" evidence="1">
    <location>
        <position position="136"/>
    </location>
    <ligand>
        <name>Fe(2+)</name>
        <dbReference type="ChEBI" id="CHEBI:29033"/>
    </ligand>
</feature>
<feature type="binding site" description="M2 metal binding site" evidence="1">
    <location>
        <position position="139"/>
    </location>
    <ligand>
        <name>Fe(2+)</name>
        <dbReference type="ChEBI" id="CHEBI:29033"/>
    </ligand>
</feature>
<feature type="binding site" description="M1 metal binding site" evidence="1">
    <location>
        <position position="139"/>
    </location>
    <ligand>
        <name>Zn(2+)</name>
        <dbReference type="ChEBI" id="CHEBI:29105"/>
    </ligand>
</feature>
<feature type="binding site" description="M1 metal binding site" evidence="1">
    <location>
        <position position="164"/>
    </location>
    <ligand>
        <name>Zn(2+)</name>
        <dbReference type="ChEBI" id="CHEBI:29105"/>
    </ligand>
</feature>
<feature type="binding site" description="M2 metal binding site" evidence="1">
    <location>
        <position position="165"/>
    </location>
    <ligand>
        <name>Fe(2+)</name>
        <dbReference type="ChEBI" id="CHEBI:29033"/>
    </ligand>
</feature>
<feature type="binding site" description="M2 metal binding site" evidence="1">
    <location>
        <position position="168"/>
    </location>
    <ligand>
        <name>Fe(2+)</name>
        <dbReference type="ChEBI" id="CHEBI:29033"/>
    </ligand>
</feature>
<feature type="binding site" description="M1 metal binding site" evidence="1">
    <location>
        <position position="168"/>
    </location>
    <ligand>
        <name>Zn(2+)</name>
        <dbReference type="ChEBI" id="CHEBI:29105"/>
    </ligand>
</feature>
<feature type="binding site" description="M2 metal binding site" evidence="1">
    <location>
        <position position="197"/>
    </location>
    <ligand>
        <name>Fe(2+)</name>
        <dbReference type="ChEBI" id="CHEBI:29033"/>
    </ligand>
</feature>
<sequence length="269" mass="28455">MPDFSMSNLAVAFSITLAAGLFTVLGSGLVMFSKTPNPRVLSFGLAFAGGAMVYVSLTEIFSKSSEAFAEIYDKDHAFAAATMAFLAGMGGIALIDRLVPNPHETLDAQDPSFQESKRRHIARVGMMAAFAITAHNFPEGLATFFATLENPAVGMPLALAIAIHNIPEGISIAAPVYFATRSRKKTVWACLLSGLAEPLGAALGYLVLQPFLSPAVFGSVFGVIAGVMVFLALDELLPAAKRYSDGHETVYGLTMGMAVIAVSLVLFHF</sequence>
<protein>
    <recommendedName>
        <fullName evidence="1">Zinc transporter ZupT</fullName>
    </recommendedName>
</protein>
<comment type="function">
    <text evidence="1">Mediates zinc uptake. May also transport other divalent cations.</text>
</comment>
<comment type="catalytic activity">
    <reaction evidence="1">
        <text>Zn(2+)(in) = Zn(2+)(out)</text>
        <dbReference type="Rhea" id="RHEA:29351"/>
        <dbReference type="ChEBI" id="CHEBI:29105"/>
    </reaction>
</comment>
<comment type="subcellular location">
    <subcellularLocation>
        <location evidence="1">Cell inner membrane</location>
        <topology evidence="1">Multi-pass membrane protein</topology>
    </subcellularLocation>
</comment>
<comment type="similarity">
    <text evidence="1">Belongs to the ZIP transporter (TC 2.A.5) family. ZupT subfamily.</text>
</comment>
<gene>
    <name evidence="1" type="primary">zupT</name>
    <name type="ordered locus">NMC0165</name>
</gene>
<reference key="1">
    <citation type="journal article" date="2007" name="PLoS Genet.">
        <title>Meningococcal genetic variation mechanisms viewed through comparative analysis of serogroup C strain FAM18.</title>
        <authorList>
            <person name="Bentley S.D."/>
            <person name="Vernikos G.S."/>
            <person name="Snyder L.A.S."/>
            <person name="Churcher C."/>
            <person name="Arrowsmith C."/>
            <person name="Chillingworth T."/>
            <person name="Cronin A."/>
            <person name="Davis P.H."/>
            <person name="Holroyd N.E."/>
            <person name="Jagels K."/>
            <person name="Maddison M."/>
            <person name="Moule S."/>
            <person name="Rabbinowitsch E."/>
            <person name="Sharp S."/>
            <person name="Unwin L."/>
            <person name="Whitehead S."/>
            <person name="Quail M.A."/>
            <person name="Achtman M."/>
            <person name="Barrell B.G."/>
            <person name="Saunders N.J."/>
            <person name="Parkhill J."/>
        </authorList>
    </citation>
    <scope>NUCLEOTIDE SEQUENCE [LARGE SCALE GENOMIC DNA]</scope>
    <source>
        <strain>ATCC 700532 / DSM 15464 / FAM18</strain>
    </source>
</reference>
<accession>A1KRK6</accession>
<dbReference type="EMBL" id="AM421808">
    <property type="protein sequence ID" value="CAM09484.1"/>
    <property type="molecule type" value="Genomic_DNA"/>
</dbReference>
<dbReference type="RefSeq" id="WP_002215472.1">
    <property type="nucleotide sequence ID" value="NC_008767.1"/>
</dbReference>
<dbReference type="SMR" id="A1KRK6"/>
<dbReference type="GeneID" id="93387252"/>
<dbReference type="KEGG" id="nmc:NMC0165"/>
<dbReference type="HOGENOM" id="CLU_015114_1_3_4"/>
<dbReference type="Proteomes" id="UP000002286">
    <property type="component" value="Chromosome"/>
</dbReference>
<dbReference type="GO" id="GO:0005886">
    <property type="term" value="C:plasma membrane"/>
    <property type="evidence" value="ECO:0007669"/>
    <property type="project" value="UniProtKB-SubCell"/>
</dbReference>
<dbReference type="GO" id="GO:0046872">
    <property type="term" value="F:metal ion binding"/>
    <property type="evidence" value="ECO:0007669"/>
    <property type="project" value="UniProtKB-KW"/>
</dbReference>
<dbReference type="GO" id="GO:0005385">
    <property type="term" value="F:zinc ion transmembrane transporter activity"/>
    <property type="evidence" value="ECO:0007669"/>
    <property type="project" value="UniProtKB-UniRule"/>
</dbReference>
<dbReference type="HAMAP" id="MF_00548">
    <property type="entry name" value="ZupT"/>
    <property type="match status" value="1"/>
</dbReference>
<dbReference type="InterPro" id="IPR003689">
    <property type="entry name" value="ZIP"/>
</dbReference>
<dbReference type="InterPro" id="IPR023498">
    <property type="entry name" value="Zn_transptr_ZupT"/>
</dbReference>
<dbReference type="NCBIfam" id="NF003243">
    <property type="entry name" value="PRK04201.1"/>
    <property type="match status" value="1"/>
</dbReference>
<dbReference type="PANTHER" id="PTHR11040:SF205">
    <property type="entry name" value="ZINC TRANSPORTER ZUPT"/>
    <property type="match status" value="1"/>
</dbReference>
<dbReference type="PANTHER" id="PTHR11040">
    <property type="entry name" value="ZINC/IRON TRANSPORTER"/>
    <property type="match status" value="1"/>
</dbReference>
<dbReference type="Pfam" id="PF02535">
    <property type="entry name" value="Zip"/>
    <property type="match status" value="1"/>
</dbReference>
<proteinExistence type="inferred from homology"/>
<evidence type="ECO:0000255" key="1">
    <source>
        <dbReference type="HAMAP-Rule" id="MF_00548"/>
    </source>
</evidence>